<name>ASSY_CLOBA</name>
<keyword id="KW-0028">Amino-acid biosynthesis</keyword>
<keyword id="KW-0055">Arginine biosynthesis</keyword>
<keyword id="KW-0067">ATP-binding</keyword>
<keyword id="KW-0963">Cytoplasm</keyword>
<keyword id="KW-0436">Ligase</keyword>
<keyword id="KW-0547">Nucleotide-binding</keyword>
<accession>B2UYI0</accession>
<feature type="chain" id="PRO_1000089029" description="Argininosuccinate synthase">
    <location>
        <begin position="1"/>
        <end position="407"/>
    </location>
</feature>
<feature type="binding site" evidence="1">
    <location>
        <begin position="10"/>
        <end position="18"/>
    </location>
    <ligand>
        <name>ATP</name>
        <dbReference type="ChEBI" id="CHEBI:30616"/>
    </ligand>
</feature>
<feature type="binding site" evidence="1">
    <location>
        <position position="88"/>
    </location>
    <ligand>
        <name>L-citrulline</name>
        <dbReference type="ChEBI" id="CHEBI:57743"/>
    </ligand>
</feature>
<feature type="binding site" evidence="1">
    <location>
        <position position="93"/>
    </location>
    <ligand>
        <name>L-citrulline</name>
        <dbReference type="ChEBI" id="CHEBI:57743"/>
    </ligand>
</feature>
<feature type="binding site" evidence="1">
    <location>
        <position position="118"/>
    </location>
    <ligand>
        <name>ATP</name>
        <dbReference type="ChEBI" id="CHEBI:30616"/>
    </ligand>
</feature>
<feature type="binding site" evidence="1">
    <location>
        <position position="120"/>
    </location>
    <ligand>
        <name>L-aspartate</name>
        <dbReference type="ChEBI" id="CHEBI:29991"/>
    </ligand>
</feature>
<feature type="binding site" evidence="1">
    <location>
        <position position="124"/>
    </location>
    <ligand>
        <name>L-aspartate</name>
        <dbReference type="ChEBI" id="CHEBI:29991"/>
    </ligand>
</feature>
<feature type="binding site" evidence="1">
    <location>
        <position position="124"/>
    </location>
    <ligand>
        <name>L-citrulline</name>
        <dbReference type="ChEBI" id="CHEBI:57743"/>
    </ligand>
</feature>
<feature type="binding site" evidence="1">
    <location>
        <position position="125"/>
    </location>
    <ligand>
        <name>L-aspartate</name>
        <dbReference type="ChEBI" id="CHEBI:29991"/>
    </ligand>
</feature>
<feature type="binding site" evidence="1">
    <location>
        <position position="128"/>
    </location>
    <ligand>
        <name>L-citrulline</name>
        <dbReference type="ChEBI" id="CHEBI:57743"/>
    </ligand>
</feature>
<feature type="binding site" evidence="1">
    <location>
        <position position="177"/>
    </location>
    <ligand>
        <name>L-citrulline</name>
        <dbReference type="ChEBI" id="CHEBI:57743"/>
    </ligand>
</feature>
<feature type="binding site" evidence="1">
    <location>
        <position position="186"/>
    </location>
    <ligand>
        <name>L-citrulline</name>
        <dbReference type="ChEBI" id="CHEBI:57743"/>
    </ligand>
</feature>
<feature type="binding site" evidence="1">
    <location>
        <position position="263"/>
    </location>
    <ligand>
        <name>L-citrulline</name>
        <dbReference type="ChEBI" id="CHEBI:57743"/>
    </ligand>
</feature>
<feature type="binding site" evidence="1">
    <location>
        <position position="275"/>
    </location>
    <ligand>
        <name>L-citrulline</name>
        <dbReference type="ChEBI" id="CHEBI:57743"/>
    </ligand>
</feature>
<dbReference type="EC" id="6.3.4.5" evidence="1"/>
<dbReference type="EMBL" id="CP001078">
    <property type="protein sequence ID" value="ACD53261.1"/>
    <property type="molecule type" value="Genomic_DNA"/>
</dbReference>
<dbReference type="RefSeq" id="WP_012451206.1">
    <property type="nucleotide sequence ID" value="NC_010723.1"/>
</dbReference>
<dbReference type="SMR" id="B2UYI0"/>
<dbReference type="KEGG" id="cbt:CLH_2865"/>
<dbReference type="HOGENOM" id="CLU_032784_4_2_9"/>
<dbReference type="UniPathway" id="UPA00068">
    <property type="reaction ID" value="UER00113"/>
</dbReference>
<dbReference type="GO" id="GO:0005737">
    <property type="term" value="C:cytoplasm"/>
    <property type="evidence" value="ECO:0007669"/>
    <property type="project" value="UniProtKB-SubCell"/>
</dbReference>
<dbReference type="GO" id="GO:0004055">
    <property type="term" value="F:argininosuccinate synthase activity"/>
    <property type="evidence" value="ECO:0007669"/>
    <property type="project" value="UniProtKB-UniRule"/>
</dbReference>
<dbReference type="GO" id="GO:0005524">
    <property type="term" value="F:ATP binding"/>
    <property type="evidence" value="ECO:0007669"/>
    <property type="project" value="UniProtKB-UniRule"/>
</dbReference>
<dbReference type="GO" id="GO:0000053">
    <property type="term" value="P:argininosuccinate metabolic process"/>
    <property type="evidence" value="ECO:0007669"/>
    <property type="project" value="TreeGrafter"/>
</dbReference>
<dbReference type="GO" id="GO:0006526">
    <property type="term" value="P:L-arginine biosynthetic process"/>
    <property type="evidence" value="ECO:0007669"/>
    <property type="project" value="UniProtKB-UniRule"/>
</dbReference>
<dbReference type="GO" id="GO:0000050">
    <property type="term" value="P:urea cycle"/>
    <property type="evidence" value="ECO:0007669"/>
    <property type="project" value="TreeGrafter"/>
</dbReference>
<dbReference type="CDD" id="cd01999">
    <property type="entry name" value="ASS"/>
    <property type="match status" value="1"/>
</dbReference>
<dbReference type="FunFam" id="3.40.50.620:FF:000019">
    <property type="entry name" value="Argininosuccinate synthase"/>
    <property type="match status" value="1"/>
</dbReference>
<dbReference type="FunFam" id="3.90.1260.10:FF:000007">
    <property type="entry name" value="Argininosuccinate synthase"/>
    <property type="match status" value="1"/>
</dbReference>
<dbReference type="Gene3D" id="3.90.1260.10">
    <property type="entry name" value="Argininosuccinate synthetase, chain A, domain 2"/>
    <property type="match status" value="1"/>
</dbReference>
<dbReference type="Gene3D" id="3.40.50.620">
    <property type="entry name" value="HUPs"/>
    <property type="match status" value="1"/>
</dbReference>
<dbReference type="Gene3D" id="1.20.5.470">
    <property type="entry name" value="Single helix bin"/>
    <property type="match status" value="1"/>
</dbReference>
<dbReference type="HAMAP" id="MF_00005">
    <property type="entry name" value="Arg_succ_synth_type1"/>
    <property type="match status" value="1"/>
</dbReference>
<dbReference type="InterPro" id="IPR048268">
    <property type="entry name" value="Arginosuc_syn_C"/>
</dbReference>
<dbReference type="InterPro" id="IPR048267">
    <property type="entry name" value="Arginosuc_syn_N"/>
</dbReference>
<dbReference type="InterPro" id="IPR001518">
    <property type="entry name" value="Arginosuc_synth"/>
</dbReference>
<dbReference type="InterPro" id="IPR018223">
    <property type="entry name" value="Arginosuc_synth_CS"/>
</dbReference>
<dbReference type="InterPro" id="IPR023434">
    <property type="entry name" value="Arginosuc_synth_type_1_subfam"/>
</dbReference>
<dbReference type="InterPro" id="IPR024074">
    <property type="entry name" value="AS_cat/multimer_dom_body"/>
</dbReference>
<dbReference type="InterPro" id="IPR014729">
    <property type="entry name" value="Rossmann-like_a/b/a_fold"/>
</dbReference>
<dbReference type="NCBIfam" id="TIGR00032">
    <property type="entry name" value="argG"/>
    <property type="match status" value="1"/>
</dbReference>
<dbReference type="NCBIfam" id="NF001770">
    <property type="entry name" value="PRK00509.1"/>
    <property type="match status" value="1"/>
</dbReference>
<dbReference type="PANTHER" id="PTHR11587">
    <property type="entry name" value="ARGININOSUCCINATE SYNTHASE"/>
    <property type="match status" value="1"/>
</dbReference>
<dbReference type="PANTHER" id="PTHR11587:SF2">
    <property type="entry name" value="ARGININOSUCCINATE SYNTHASE"/>
    <property type="match status" value="1"/>
</dbReference>
<dbReference type="Pfam" id="PF20979">
    <property type="entry name" value="Arginosuc_syn_C"/>
    <property type="match status" value="1"/>
</dbReference>
<dbReference type="Pfam" id="PF00764">
    <property type="entry name" value="Arginosuc_synth"/>
    <property type="match status" value="1"/>
</dbReference>
<dbReference type="SUPFAM" id="SSF52402">
    <property type="entry name" value="Adenine nucleotide alpha hydrolases-like"/>
    <property type="match status" value="1"/>
</dbReference>
<dbReference type="SUPFAM" id="SSF69864">
    <property type="entry name" value="Argininosuccinate synthetase, C-terminal domain"/>
    <property type="match status" value="1"/>
</dbReference>
<dbReference type="PROSITE" id="PS00564">
    <property type="entry name" value="ARGININOSUCCIN_SYN_1"/>
    <property type="match status" value="1"/>
</dbReference>
<dbReference type="PROSITE" id="PS00565">
    <property type="entry name" value="ARGININOSUCCIN_SYN_2"/>
    <property type="match status" value="1"/>
</dbReference>
<reference key="1">
    <citation type="submission" date="2008-05" db="EMBL/GenBank/DDBJ databases">
        <title>Complete genome sequence of Clostridium botulinum E3 str. Alaska E43.</title>
        <authorList>
            <person name="Brinkac L.M."/>
            <person name="Brown J.L."/>
            <person name="Bruce D."/>
            <person name="Detter C."/>
            <person name="Munk C."/>
            <person name="Smith L.A."/>
            <person name="Smith T.J."/>
            <person name="Sutton G."/>
            <person name="Brettin T.S."/>
        </authorList>
    </citation>
    <scope>NUCLEOTIDE SEQUENCE [LARGE SCALE GENOMIC DNA]</scope>
    <source>
        <strain>Alaska E43 / Type E3</strain>
    </source>
</reference>
<gene>
    <name evidence="1" type="primary">argG</name>
    <name type="ordered locus">CLH_2865</name>
</gene>
<sequence>MNKLNKVILAYSGGLDTSIIIPWLKENYNCEVIAVCGNVGQKDELDGLEEKAIKTGASKLYMEDLTKEFVEDYIFPTIQAGAIYEGKYLLGTSFARPLIGKRLVEIAKVEGADAICHGCTGKGNDQVRFELAVKAFDPDMKIIAPWRIWDIKSREDEITYAEARNVPIKINHETNYSKDKNIWHLSHEGLDLEDPKNEPKYDEILELSNSLEKAPNEPTYITLTFEKGNAVALNGEKMDAVTLLDELNKIGGKNAIGITDMVENRLVGMKSRGVYETPGGTILYKAHKDLEELCLDKETSHYKEQISLKFADLVYNGLWFTPLREALSEFIKKTQETVTGEIKLKLYKGNIVNAGMTSPYSLYSEEYATFGEDAVYNQNDSAGFITLYGLPTVVKAKMYQSLKKEDK</sequence>
<organism>
    <name type="scientific">Clostridium botulinum (strain Alaska E43 / Type E3)</name>
    <dbReference type="NCBI Taxonomy" id="508767"/>
    <lineage>
        <taxon>Bacteria</taxon>
        <taxon>Bacillati</taxon>
        <taxon>Bacillota</taxon>
        <taxon>Clostridia</taxon>
        <taxon>Eubacteriales</taxon>
        <taxon>Clostridiaceae</taxon>
        <taxon>Clostridium</taxon>
    </lineage>
</organism>
<evidence type="ECO:0000255" key="1">
    <source>
        <dbReference type="HAMAP-Rule" id="MF_00005"/>
    </source>
</evidence>
<proteinExistence type="inferred from homology"/>
<protein>
    <recommendedName>
        <fullName evidence="1">Argininosuccinate synthase</fullName>
        <ecNumber evidence="1">6.3.4.5</ecNumber>
    </recommendedName>
    <alternativeName>
        <fullName evidence="1">Citrulline--aspartate ligase</fullName>
    </alternativeName>
</protein>
<comment type="catalytic activity">
    <reaction evidence="1">
        <text>L-citrulline + L-aspartate + ATP = 2-(N(omega)-L-arginino)succinate + AMP + diphosphate + H(+)</text>
        <dbReference type="Rhea" id="RHEA:10932"/>
        <dbReference type="ChEBI" id="CHEBI:15378"/>
        <dbReference type="ChEBI" id="CHEBI:29991"/>
        <dbReference type="ChEBI" id="CHEBI:30616"/>
        <dbReference type="ChEBI" id="CHEBI:33019"/>
        <dbReference type="ChEBI" id="CHEBI:57472"/>
        <dbReference type="ChEBI" id="CHEBI:57743"/>
        <dbReference type="ChEBI" id="CHEBI:456215"/>
        <dbReference type="EC" id="6.3.4.5"/>
    </reaction>
</comment>
<comment type="pathway">
    <text evidence="1">Amino-acid biosynthesis; L-arginine biosynthesis; L-arginine from L-ornithine and carbamoyl phosphate: step 2/3.</text>
</comment>
<comment type="subunit">
    <text evidence="1">Homotetramer.</text>
</comment>
<comment type="subcellular location">
    <subcellularLocation>
        <location evidence="1">Cytoplasm</location>
    </subcellularLocation>
</comment>
<comment type="similarity">
    <text evidence="1">Belongs to the argininosuccinate synthase family. Type 1 subfamily.</text>
</comment>